<comment type="function">
    <text evidence="1">Catalyzes the transfer of endogenously produced octanoic acid from octanoyl-acyl-carrier-protein onto the lipoyl domains of lipoate-dependent enzymes. Lipoyl-ACP can also act as a substrate although octanoyl-ACP is likely to be the physiological substrate.</text>
</comment>
<comment type="catalytic activity">
    <reaction evidence="1">
        <text>octanoyl-[ACP] + L-lysyl-[protein] = N(6)-octanoyl-L-lysyl-[protein] + holo-[ACP] + H(+)</text>
        <dbReference type="Rhea" id="RHEA:17665"/>
        <dbReference type="Rhea" id="RHEA-COMP:9636"/>
        <dbReference type="Rhea" id="RHEA-COMP:9685"/>
        <dbReference type="Rhea" id="RHEA-COMP:9752"/>
        <dbReference type="Rhea" id="RHEA-COMP:9928"/>
        <dbReference type="ChEBI" id="CHEBI:15378"/>
        <dbReference type="ChEBI" id="CHEBI:29969"/>
        <dbReference type="ChEBI" id="CHEBI:64479"/>
        <dbReference type="ChEBI" id="CHEBI:78463"/>
        <dbReference type="ChEBI" id="CHEBI:78809"/>
        <dbReference type="EC" id="2.3.1.181"/>
    </reaction>
</comment>
<comment type="pathway">
    <text evidence="1">Protein modification; protein lipoylation via endogenous pathway; protein N(6)-(lipoyl)lysine from octanoyl-[acyl-carrier-protein]: step 1/2.</text>
</comment>
<comment type="subcellular location">
    <subcellularLocation>
        <location evidence="1">Cytoplasm</location>
    </subcellularLocation>
</comment>
<comment type="miscellaneous">
    <text evidence="1">In the reaction, the free carboxyl group of octanoic acid is attached via an amide linkage to the epsilon-amino group of a specific lysine residue of lipoyl domains of lipoate-dependent enzymes.</text>
</comment>
<comment type="similarity">
    <text evidence="1">Belongs to the LipB family.</text>
</comment>
<protein>
    <recommendedName>
        <fullName evidence="1">Octanoyltransferase</fullName>
        <ecNumber evidence="1">2.3.1.181</ecNumber>
    </recommendedName>
    <alternativeName>
        <fullName evidence="1">Lipoate-protein ligase B</fullName>
    </alternativeName>
    <alternativeName>
        <fullName evidence="1">Lipoyl/octanoyl transferase</fullName>
    </alternativeName>
    <alternativeName>
        <fullName evidence="1">Octanoyl-[acyl-carrier-protein]-protein N-octanoyltransferase</fullName>
    </alternativeName>
</protein>
<evidence type="ECO:0000255" key="1">
    <source>
        <dbReference type="HAMAP-Rule" id="MF_00013"/>
    </source>
</evidence>
<evidence type="ECO:0000255" key="2">
    <source>
        <dbReference type="PROSITE-ProRule" id="PRU01067"/>
    </source>
</evidence>
<keyword id="KW-0012">Acyltransferase</keyword>
<keyword id="KW-0963">Cytoplasm</keyword>
<keyword id="KW-1185">Reference proteome</keyword>
<keyword id="KW-0808">Transferase</keyword>
<gene>
    <name evidence="1" type="primary">lipB</name>
    <name type="ordered locus">E2348C_0530</name>
</gene>
<name>LIPB_ECO27</name>
<dbReference type="EC" id="2.3.1.181" evidence="1"/>
<dbReference type="EMBL" id="FM180568">
    <property type="protein sequence ID" value="CAS08078.1"/>
    <property type="molecule type" value="Genomic_DNA"/>
</dbReference>
<dbReference type="RefSeq" id="WP_000284027.1">
    <property type="nucleotide sequence ID" value="NC_011601.1"/>
</dbReference>
<dbReference type="SMR" id="B7UKS0"/>
<dbReference type="GeneID" id="93776852"/>
<dbReference type="KEGG" id="ecg:E2348C_0530"/>
<dbReference type="HOGENOM" id="CLU_035168_3_1_6"/>
<dbReference type="UniPathway" id="UPA00538">
    <property type="reaction ID" value="UER00592"/>
</dbReference>
<dbReference type="Proteomes" id="UP000008205">
    <property type="component" value="Chromosome"/>
</dbReference>
<dbReference type="GO" id="GO:0005737">
    <property type="term" value="C:cytoplasm"/>
    <property type="evidence" value="ECO:0007669"/>
    <property type="project" value="UniProtKB-SubCell"/>
</dbReference>
<dbReference type="GO" id="GO:0033819">
    <property type="term" value="F:lipoyl(octanoyl) transferase activity"/>
    <property type="evidence" value="ECO:0007669"/>
    <property type="project" value="UniProtKB-EC"/>
</dbReference>
<dbReference type="GO" id="GO:0036211">
    <property type="term" value="P:protein modification process"/>
    <property type="evidence" value="ECO:0007669"/>
    <property type="project" value="InterPro"/>
</dbReference>
<dbReference type="CDD" id="cd16444">
    <property type="entry name" value="LipB"/>
    <property type="match status" value="1"/>
</dbReference>
<dbReference type="FunFam" id="3.30.930.10:FF:000020">
    <property type="entry name" value="Octanoyltransferase"/>
    <property type="match status" value="1"/>
</dbReference>
<dbReference type="Gene3D" id="3.30.930.10">
    <property type="entry name" value="Bira Bifunctional Protein, Domain 2"/>
    <property type="match status" value="1"/>
</dbReference>
<dbReference type="HAMAP" id="MF_00013">
    <property type="entry name" value="LipB"/>
    <property type="match status" value="1"/>
</dbReference>
<dbReference type="InterPro" id="IPR045864">
    <property type="entry name" value="aa-tRNA-synth_II/BPL/LPL"/>
</dbReference>
<dbReference type="InterPro" id="IPR004143">
    <property type="entry name" value="BPL_LPL_catalytic"/>
</dbReference>
<dbReference type="InterPro" id="IPR000544">
    <property type="entry name" value="Octanoyltransferase"/>
</dbReference>
<dbReference type="InterPro" id="IPR020605">
    <property type="entry name" value="Octanoyltransferase_CS"/>
</dbReference>
<dbReference type="NCBIfam" id="TIGR00214">
    <property type="entry name" value="lipB"/>
    <property type="match status" value="1"/>
</dbReference>
<dbReference type="NCBIfam" id="NF010922">
    <property type="entry name" value="PRK14342.1"/>
    <property type="match status" value="1"/>
</dbReference>
<dbReference type="PANTHER" id="PTHR10993:SF7">
    <property type="entry name" value="LIPOYLTRANSFERASE 2, MITOCHONDRIAL-RELATED"/>
    <property type="match status" value="1"/>
</dbReference>
<dbReference type="PANTHER" id="PTHR10993">
    <property type="entry name" value="OCTANOYLTRANSFERASE"/>
    <property type="match status" value="1"/>
</dbReference>
<dbReference type="Pfam" id="PF21948">
    <property type="entry name" value="LplA-B_cat"/>
    <property type="match status" value="1"/>
</dbReference>
<dbReference type="PIRSF" id="PIRSF016262">
    <property type="entry name" value="LPLase"/>
    <property type="match status" value="1"/>
</dbReference>
<dbReference type="SUPFAM" id="SSF55681">
    <property type="entry name" value="Class II aaRS and biotin synthetases"/>
    <property type="match status" value="1"/>
</dbReference>
<dbReference type="PROSITE" id="PS51733">
    <property type="entry name" value="BPL_LPL_CATALYTIC"/>
    <property type="match status" value="1"/>
</dbReference>
<dbReference type="PROSITE" id="PS01313">
    <property type="entry name" value="LIPB"/>
    <property type="match status" value="1"/>
</dbReference>
<proteinExistence type="inferred from homology"/>
<reference key="1">
    <citation type="journal article" date="2009" name="J. Bacteriol.">
        <title>Complete genome sequence and comparative genome analysis of enteropathogenic Escherichia coli O127:H6 strain E2348/69.</title>
        <authorList>
            <person name="Iguchi A."/>
            <person name="Thomson N.R."/>
            <person name="Ogura Y."/>
            <person name="Saunders D."/>
            <person name="Ooka T."/>
            <person name="Henderson I.R."/>
            <person name="Harris D."/>
            <person name="Asadulghani M."/>
            <person name="Kurokawa K."/>
            <person name="Dean P."/>
            <person name="Kenny B."/>
            <person name="Quail M.A."/>
            <person name="Thurston S."/>
            <person name="Dougan G."/>
            <person name="Hayashi T."/>
            <person name="Parkhill J."/>
            <person name="Frankel G."/>
        </authorList>
    </citation>
    <scope>NUCLEOTIDE SEQUENCE [LARGE SCALE GENOMIC DNA]</scope>
    <source>
        <strain>E2348/69 / EPEC</strain>
    </source>
</reference>
<accession>B7UKS0</accession>
<organism>
    <name type="scientific">Escherichia coli O127:H6 (strain E2348/69 / EPEC)</name>
    <dbReference type="NCBI Taxonomy" id="574521"/>
    <lineage>
        <taxon>Bacteria</taxon>
        <taxon>Pseudomonadati</taxon>
        <taxon>Pseudomonadota</taxon>
        <taxon>Gammaproteobacteria</taxon>
        <taxon>Enterobacterales</taxon>
        <taxon>Enterobacteriaceae</taxon>
        <taxon>Escherichia</taxon>
    </lineage>
</organism>
<feature type="chain" id="PRO_1000116545" description="Octanoyltransferase">
    <location>
        <begin position="1"/>
        <end position="213"/>
    </location>
</feature>
<feature type="domain" description="BPL/LPL catalytic" evidence="2">
    <location>
        <begin position="32"/>
        <end position="207"/>
    </location>
</feature>
<feature type="active site" description="Acyl-thioester intermediate" evidence="1">
    <location>
        <position position="169"/>
    </location>
</feature>
<feature type="binding site" evidence="1">
    <location>
        <begin position="71"/>
        <end position="78"/>
    </location>
    <ligand>
        <name>substrate</name>
    </ligand>
</feature>
<feature type="binding site" evidence="1">
    <location>
        <begin position="138"/>
        <end position="140"/>
    </location>
    <ligand>
        <name>substrate</name>
    </ligand>
</feature>
<feature type="binding site" evidence="1">
    <location>
        <begin position="151"/>
        <end position="153"/>
    </location>
    <ligand>
        <name>substrate</name>
    </ligand>
</feature>
<feature type="site" description="Lowers pKa of active site Cys" evidence="1">
    <location>
        <position position="135"/>
    </location>
</feature>
<sequence length="213" mass="23883">MYQDKILVRQLGLQPYEPISQAMHEFTDTRDDSTLDEIWLVEHYPVFTQGQAGKAEHILMPGDIPVIQSDRGGQVTYHGPGQQVMYVLLNLKRRKLGVRELVTLLEQTVVNTLAELGIEAHPRADAPGVYVGEKKICSLGLRIRRGCSFHGLALNVNMDLSPFLRINPCGYAGMEMAKISQWKPEATTNNIAPRLLENILALLNNPDFEYITA</sequence>